<keyword id="KW-0687">Ribonucleoprotein</keyword>
<keyword id="KW-0689">Ribosomal protein</keyword>
<keyword id="KW-0694">RNA-binding</keyword>
<keyword id="KW-0699">rRNA-binding</keyword>
<sequence>MELNNLKPAAGAKHAKRRVGRGIGSGLGKTAGRGHKGQKSRSGGFHKVGFEGGQMPLQRRLPKRGFTSLTKEFVGEVRLSDLEKLPVDEIDLLALKQAGLVGELTKSAKIIATGELKRKIVVKGLGATKGARAAIEAAGGSFAE</sequence>
<feature type="chain" id="PRO_1000142783" description="Large ribosomal subunit protein uL15">
    <location>
        <begin position="1"/>
        <end position="144"/>
    </location>
</feature>
<feature type="region of interest" description="Disordered" evidence="2">
    <location>
        <begin position="1"/>
        <end position="56"/>
    </location>
</feature>
<feature type="compositionally biased region" description="Gly residues" evidence="2">
    <location>
        <begin position="21"/>
        <end position="31"/>
    </location>
</feature>
<reference key="1">
    <citation type="submission" date="2008-02" db="EMBL/GenBank/DDBJ databases">
        <title>Complete sequence of chromosome 1 of Burkholderia cenocepacia MC0-3.</title>
        <authorList>
            <person name="Copeland A."/>
            <person name="Lucas S."/>
            <person name="Lapidus A."/>
            <person name="Barry K."/>
            <person name="Bruce D."/>
            <person name="Goodwin L."/>
            <person name="Glavina del Rio T."/>
            <person name="Dalin E."/>
            <person name="Tice H."/>
            <person name="Pitluck S."/>
            <person name="Chain P."/>
            <person name="Malfatti S."/>
            <person name="Shin M."/>
            <person name="Vergez L."/>
            <person name="Schmutz J."/>
            <person name="Larimer F."/>
            <person name="Land M."/>
            <person name="Hauser L."/>
            <person name="Kyrpides N."/>
            <person name="Mikhailova N."/>
            <person name="Tiedje J."/>
            <person name="Richardson P."/>
        </authorList>
    </citation>
    <scope>NUCLEOTIDE SEQUENCE [LARGE SCALE GENOMIC DNA]</scope>
    <source>
        <strain>MC0-3</strain>
    </source>
</reference>
<organism>
    <name type="scientific">Burkholderia orbicola (strain MC0-3)</name>
    <dbReference type="NCBI Taxonomy" id="406425"/>
    <lineage>
        <taxon>Bacteria</taxon>
        <taxon>Pseudomonadati</taxon>
        <taxon>Pseudomonadota</taxon>
        <taxon>Betaproteobacteria</taxon>
        <taxon>Burkholderiales</taxon>
        <taxon>Burkholderiaceae</taxon>
        <taxon>Burkholderia</taxon>
        <taxon>Burkholderia cepacia complex</taxon>
        <taxon>Burkholderia orbicola</taxon>
    </lineage>
</organism>
<evidence type="ECO:0000255" key="1">
    <source>
        <dbReference type="HAMAP-Rule" id="MF_01341"/>
    </source>
</evidence>
<evidence type="ECO:0000256" key="2">
    <source>
        <dbReference type="SAM" id="MobiDB-lite"/>
    </source>
</evidence>
<evidence type="ECO:0000305" key="3"/>
<comment type="function">
    <text evidence="1">Binds to the 23S rRNA.</text>
</comment>
<comment type="subunit">
    <text evidence="1">Part of the 50S ribosomal subunit.</text>
</comment>
<comment type="similarity">
    <text evidence="1">Belongs to the universal ribosomal protein uL15 family.</text>
</comment>
<protein>
    <recommendedName>
        <fullName evidence="1">Large ribosomal subunit protein uL15</fullName>
    </recommendedName>
    <alternativeName>
        <fullName evidence="3">50S ribosomal protein L15</fullName>
    </alternativeName>
</protein>
<accession>B1JU41</accession>
<gene>
    <name evidence="1" type="primary">rplO</name>
    <name type="ordered locus">Bcenmc03_0346</name>
</gene>
<dbReference type="EMBL" id="CP000958">
    <property type="protein sequence ID" value="ACA89526.1"/>
    <property type="molecule type" value="Genomic_DNA"/>
</dbReference>
<dbReference type="RefSeq" id="WP_006477180.1">
    <property type="nucleotide sequence ID" value="NC_010508.1"/>
</dbReference>
<dbReference type="SMR" id="B1JU41"/>
<dbReference type="GeneID" id="93193432"/>
<dbReference type="KEGG" id="bcm:Bcenmc03_0346"/>
<dbReference type="HOGENOM" id="CLU_055188_4_2_4"/>
<dbReference type="Proteomes" id="UP000002169">
    <property type="component" value="Chromosome 1"/>
</dbReference>
<dbReference type="GO" id="GO:0022625">
    <property type="term" value="C:cytosolic large ribosomal subunit"/>
    <property type="evidence" value="ECO:0007669"/>
    <property type="project" value="TreeGrafter"/>
</dbReference>
<dbReference type="GO" id="GO:0019843">
    <property type="term" value="F:rRNA binding"/>
    <property type="evidence" value="ECO:0007669"/>
    <property type="project" value="UniProtKB-UniRule"/>
</dbReference>
<dbReference type="GO" id="GO:0003735">
    <property type="term" value="F:structural constituent of ribosome"/>
    <property type="evidence" value="ECO:0007669"/>
    <property type="project" value="InterPro"/>
</dbReference>
<dbReference type="GO" id="GO:0006412">
    <property type="term" value="P:translation"/>
    <property type="evidence" value="ECO:0007669"/>
    <property type="project" value="UniProtKB-UniRule"/>
</dbReference>
<dbReference type="Gene3D" id="3.100.10.10">
    <property type="match status" value="1"/>
</dbReference>
<dbReference type="HAMAP" id="MF_01341">
    <property type="entry name" value="Ribosomal_uL15"/>
    <property type="match status" value="1"/>
</dbReference>
<dbReference type="InterPro" id="IPR030878">
    <property type="entry name" value="Ribosomal_uL15"/>
</dbReference>
<dbReference type="InterPro" id="IPR021131">
    <property type="entry name" value="Ribosomal_uL15/eL18"/>
</dbReference>
<dbReference type="InterPro" id="IPR036227">
    <property type="entry name" value="Ribosomal_uL15/eL18_sf"/>
</dbReference>
<dbReference type="InterPro" id="IPR005749">
    <property type="entry name" value="Ribosomal_uL15_bac-type"/>
</dbReference>
<dbReference type="InterPro" id="IPR001196">
    <property type="entry name" value="Ribosomal_uL15_CS"/>
</dbReference>
<dbReference type="NCBIfam" id="TIGR01071">
    <property type="entry name" value="rplO_bact"/>
    <property type="match status" value="1"/>
</dbReference>
<dbReference type="PANTHER" id="PTHR12934">
    <property type="entry name" value="50S RIBOSOMAL PROTEIN L15"/>
    <property type="match status" value="1"/>
</dbReference>
<dbReference type="PANTHER" id="PTHR12934:SF11">
    <property type="entry name" value="LARGE RIBOSOMAL SUBUNIT PROTEIN UL15M"/>
    <property type="match status" value="1"/>
</dbReference>
<dbReference type="Pfam" id="PF00828">
    <property type="entry name" value="Ribosomal_L27A"/>
    <property type="match status" value="1"/>
</dbReference>
<dbReference type="SUPFAM" id="SSF52080">
    <property type="entry name" value="Ribosomal proteins L15p and L18e"/>
    <property type="match status" value="1"/>
</dbReference>
<dbReference type="PROSITE" id="PS00475">
    <property type="entry name" value="RIBOSOMAL_L15"/>
    <property type="match status" value="1"/>
</dbReference>
<name>RL15_BURO0</name>
<proteinExistence type="inferred from homology"/>